<reference key="1">
    <citation type="submission" date="2007-06" db="EMBL/GenBank/DDBJ databases">
        <title>Complete sequence of Methanococcus maripaludis C7.</title>
        <authorList>
            <consortium name="US DOE Joint Genome Institute"/>
            <person name="Copeland A."/>
            <person name="Lucas S."/>
            <person name="Lapidus A."/>
            <person name="Barry K."/>
            <person name="Glavina del Rio T."/>
            <person name="Dalin E."/>
            <person name="Tice H."/>
            <person name="Pitluck S."/>
            <person name="Clum A."/>
            <person name="Schmutz J."/>
            <person name="Larimer F."/>
            <person name="Land M."/>
            <person name="Hauser L."/>
            <person name="Kyrpides N."/>
            <person name="Anderson I."/>
            <person name="Sieprawska-Lupa M."/>
            <person name="Whitman W.B."/>
            <person name="Richardson P."/>
        </authorList>
    </citation>
    <scope>NUCLEOTIDE SEQUENCE [LARGE SCALE GENOMIC DNA]</scope>
    <source>
        <strain>C7 / ATCC BAA-1331</strain>
    </source>
</reference>
<gene>
    <name evidence="1" type="primary">cofC</name>
    <name type="ordered locus">MmarC7_1116</name>
</gene>
<accession>A6VIA6</accession>
<name>COFC_METM7</name>
<proteinExistence type="inferred from homology"/>
<protein>
    <recommendedName>
        <fullName evidence="1">2-phospho-L-lactate guanylyltransferase</fullName>
        <shortName evidence="1">LP guanylyltransferase</shortName>
        <ecNumber evidence="1">2.7.7.68</ecNumber>
    </recommendedName>
</protein>
<comment type="function">
    <text evidence="1">Guanylyltransferase that catalyzes the activation of (2S)-2-phospholactate (2-PL) as (2S)-lactyl-2-diphospho-5'-guanosine, via the condensation of 2-PL with GTP. It is involved in the biosynthesis of coenzyme F420, a hydride carrier cofactor.</text>
</comment>
<comment type="catalytic activity">
    <reaction evidence="1">
        <text>(2S)-2-phospholactate + GTP + H(+) = (2S)-lactyl-2-diphospho-5'-guanosine + diphosphate</text>
        <dbReference type="Rhea" id="RHEA:63424"/>
        <dbReference type="ChEBI" id="CHEBI:15378"/>
        <dbReference type="ChEBI" id="CHEBI:33019"/>
        <dbReference type="ChEBI" id="CHEBI:37565"/>
        <dbReference type="ChEBI" id="CHEBI:59435"/>
        <dbReference type="ChEBI" id="CHEBI:59906"/>
        <dbReference type="EC" id="2.7.7.68"/>
    </reaction>
</comment>
<comment type="pathway">
    <text evidence="1">Cofactor biosynthesis; coenzyme F420 biosynthesis.</text>
</comment>
<comment type="subunit">
    <text evidence="1">Homodimer.</text>
</comment>
<comment type="similarity">
    <text evidence="1">Belongs to the CofC family.</text>
</comment>
<dbReference type="EC" id="2.7.7.68" evidence="1"/>
<dbReference type="EMBL" id="CP000745">
    <property type="protein sequence ID" value="ABR66182.1"/>
    <property type="molecule type" value="Genomic_DNA"/>
</dbReference>
<dbReference type="SMR" id="A6VIA6"/>
<dbReference type="STRING" id="426368.MmarC7_1116"/>
<dbReference type="KEGG" id="mmz:MmarC7_1116"/>
<dbReference type="eggNOG" id="arCOG04472">
    <property type="taxonomic scope" value="Archaea"/>
</dbReference>
<dbReference type="HOGENOM" id="CLU_076569_2_0_2"/>
<dbReference type="OrthoDB" id="11179at2157"/>
<dbReference type="UniPathway" id="UPA00071"/>
<dbReference type="GO" id="GO:0005525">
    <property type="term" value="F:GTP binding"/>
    <property type="evidence" value="ECO:0007669"/>
    <property type="project" value="UniProtKB-KW"/>
</dbReference>
<dbReference type="GO" id="GO:0043814">
    <property type="term" value="F:phospholactate guanylyltransferase activity"/>
    <property type="evidence" value="ECO:0007669"/>
    <property type="project" value="UniProtKB-EC"/>
</dbReference>
<dbReference type="GO" id="GO:0052645">
    <property type="term" value="P:F420-0 metabolic process"/>
    <property type="evidence" value="ECO:0007669"/>
    <property type="project" value="UniProtKB-UniRule"/>
</dbReference>
<dbReference type="Gene3D" id="3.90.550.10">
    <property type="entry name" value="Spore Coat Polysaccharide Biosynthesis Protein SpsA, Chain A"/>
    <property type="match status" value="1"/>
</dbReference>
<dbReference type="HAMAP" id="MF_02114">
    <property type="entry name" value="CofC"/>
    <property type="match status" value="1"/>
</dbReference>
<dbReference type="InterPro" id="IPR002835">
    <property type="entry name" value="CofC"/>
</dbReference>
<dbReference type="InterPro" id="IPR029044">
    <property type="entry name" value="Nucleotide-diphossugar_trans"/>
</dbReference>
<dbReference type="NCBIfam" id="TIGR03552">
    <property type="entry name" value="F420_cofC"/>
    <property type="match status" value="1"/>
</dbReference>
<dbReference type="PANTHER" id="PTHR40392">
    <property type="entry name" value="2-PHOSPHO-L-LACTATE GUANYLYLTRANSFERASE"/>
    <property type="match status" value="1"/>
</dbReference>
<dbReference type="PANTHER" id="PTHR40392:SF1">
    <property type="entry name" value="2-PHOSPHO-L-LACTATE GUANYLYLTRANSFERASE"/>
    <property type="match status" value="1"/>
</dbReference>
<dbReference type="Pfam" id="PF01983">
    <property type="entry name" value="CofC"/>
    <property type="match status" value="1"/>
</dbReference>
<dbReference type="SUPFAM" id="SSF53448">
    <property type="entry name" value="Nucleotide-diphospho-sugar transferases"/>
    <property type="match status" value="1"/>
</dbReference>
<feature type="chain" id="PRO_0000398747" description="2-phospho-L-lactate guanylyltransferase">
    <location>
        <begin position="1"/>
        <end position="222"/>
    </location>
</feature>
<organism>
    <name type="scientific">Methanococcus maripaludis (strain C7 / ATCC BAA-1331)</name>
    <dbReference type="NCBI Taxonomy" id="426368"/>
    <lineage>
        <taxon>Archaea</taxon>
        <taxon>Methanobacteriati</taxon>
        <taxon>Methanobacteriota</taxon>
        <taxon>Methanomada group</taxon>
        <taxon>Methanococci</taxon>
        <taxon>Methanococcales</taxon>
        <taxon>Methanococcaceae</taxon>
        <taxon>Methanococcus</taxon>
    </lineage>
</organism>
<evidence type="ECO:0000255" key="1">
    <source>
        <dbReference type="HAMAP-Rule" id="MF_02114"/>
    </source>
</evidence>
<keyword id="KW-0342">GTP-binding</keyword>
<keyword id="KW-0547">Nucleotide-binding</keyword>
<keyword id="KW-0548">Nucleotidyltransferase</keyword>
<keyword id="KW-0808">Transferase</keyword>
<sequence length="222" mass="24909">MLAALIPVSPLSNVKSRLKEFLSSEERIELIKNILLDTYETVKECSDACYVVSKDEEILEFSKNLGIIPIREDSSVKGLNEAISFSLKFIKEDSILITPADVPLLKEENLKAVTDKSVKNSIVICPSRGGGTNLLLLNPKECIKTQFEGFSFLKHIEEAEKNNLKVIKCHSFYTSIDVNTVEDLGEIYIHGTDTKTYQYLKNLGIEVLPKHSSAGRFNVIRK</sequence>